<name>GDIA_PONPY</name>
<evidence type="ECO:0000250" key="1"/>
<evidence type="ECO:0000250" key="2">
    <source>
        <dbReference type="UniProtKB" id="P31150"/>
    </source>
</evidence>
<evidence type="ECO:0000305" key="3"/>
<feature type="chain" id="PRO_0000056675" description="Rab GDP dissociation inhibitor alpha">
    <location>
        <begin position="1"/>
        <end position="447"/>
    </location>
</feature>
<feature type="sequence conflict" description="In Ref. 2; CAH92581." evidence="3" ref="2">
    <original>M</original>
    <variation>T</variation>
    <location>
        <position position="90"/>
    </location>
</feature>
<feature type="sequence conflict" description="In Ref. 2; CAI29668." evidence="3" ref="2">
    <original>M</original>
    <variation>T</variation>
    <location>
        <position position="168"/>
    </location>
</feature>
<feature type="sequence conflict" description="In Ref. 2; CAH92883." evidence="3" ref="2">
    <original>D</original>
    <variation>G</variation>
    <location>
        <position position="289"/>
    </location>
</feature>
<proteinExistence type="evidence at transcript level"/>
<organism>
    <name type="scientific">Pongo pygmaeus</name>
    <name type="common">Bornean orangutan</name>
    <dbReference type="NCBI Taxonomy" id="9600"/>
    <lineage>
        <taxon>Eukaryota</taxon>
        <taxon>Metazoa</taxon>
        <taxon>Chordata</taxon>
        <taxon>Craniata</taxon>
        <taxon>Vertebrata</taxon>
        <taxon>Euteleostomi</taxon>
        <taxon>Mammalia</taxon>
        <taxon>Eutheria</taxon>
        <taxon>Euarchontoglires</taxon>
        <taxon>Primates</taxon>
        <taxon>Haplorrhini</taxon>
        <taxon>Catarrhini</taxon>
        <taxon>Hominidae</taxon>
        <taxon>Pongo</taxon>
    </lineage>
</organism>
<gene>
    <name type="primary">GDI1</name>
    <name type="synonym">RABGDIA</name>
</gene>
<sequence>MDEEYDVIVLGTGLTECILSGIMSVNGKKVLHMDRNPYYGGESSSITPLEELYKRFQLLEGPPESMGRGRDWNVDLIPKFLMANGQLVKMLLYTEVTRYLDFKVVEGSFVYKGGKIYKVPSTETEALASNLMGMFEKRRFRKFLVFVANFDENDPKTFEGVDPQTTSMRDVYRKFDLGQDVIDFTGHALALYRTDDYLDQPCLETINRIKLYSESLARYGKSPYLYPLYGLGELPQGFARLSAIYGGTYMLNKPVDDIIMENGKVVGVKSEGEVARCKQLICDPSYIPDRVRKAGQVIRIICILSHPIKNTNDANSCQIIIPQNQVNRKSDIYVCMISYAHNVAAQGKYIAIASTTVETTDPEKEVEPALELLEPIDQKFVAISDLYEPIDDGCESQVFCSCSYDATTHFETTCNDIKDIYKRMAGTAFDFENMKRKQNDVFGEAEQ</sequence>
<accession>Q7YQM0</accession>
<accession>Q5NVJ5</accession>
<accession>Q5R5T3</accession>
<accession>Q5R6M9</accession>
<comment type="function">
    <text evidence="1">Regulates the GDP/GTP exchange reaction of most Rab proteins by inhibiting the dissociation of GDP from them, and the subsequent binding of GTP to them. Promotes the dissociation of GDP-bound Rab proteins from the membrane and inhibits their activation. Promotes the dissociation of RAB1A, RAB3A, RAB5A and RAB10 from membranes (By similarity).</text>
</comment>
<comment type="subunit">
    <text evidence="2">Interacts with RHOH (By similarity). Interacts with the non-phosphorylated forms of RAB1A, RAB3A, RAB5A, RAB5B, RAB5C, RAB8A, RAB8B, RAB10, RAB12, RAB35, and RAB43 (By similarity).</text>
</comment>
<comment type="subcellular location">
    <subcellularLocation>
        <location evidence="1">Cytoplasm</location>
    </subcellularLocation>
    <subcellularLocation>
        <location evidence="1">Golgi apparatus</location>
        <location evidence="1">trans-Golgi network</location>
    </subcellularLocation>
</comment>
<comment type="similarity">
    <text evidence="3">Belongs to the Rab GDI family.</text>
</comment>
<dbReference type="EMBL" id="AB102649">
    <property type="protein sequence ID" value="BAC81118.1"/>
    <property type="molecule type" value="mRNA"/>
</dbReference>
<dbReference type="EMBL" id="CR860458">
    <property type="protein sequence ID" value="CAH92581.1"/>
    <property type="molecule type" value="mRNA"/>
</dbReference>
<dbReference type="EMBL" id="CR860770">
    <property type="protein sequence ID" value="CAH92883.1"/>
    <property type="molecule type" value="mRNA"/>
</dbReference>
<dbReference type="EMBL" id="CR926033">
    <property type="protein sequence ID" value="CAI29668.1"/>
    <property type="molecule type" value="mRNA"/>
</dbReference>
<dbReference type="RefSeq" id="XP_054327621.1">
    <property type="nucleotide sequence ID" value="XM_054471646.2"/>
</dbReference>
<dbReference type="SMR" id="Q7YQM0"/>
<dbReference type="GeneID" id="129024531"/>
<dbReference type="KEGG" id="pon:100173688"/>
<dbReference type="GO" id="GO:0005794">
    <property type="term" value="C:Golgi apparatus"/>
    <property type="evidence" value="ECO:0007669"/>
    <property type="project" value="UniProtKB-SubCell"/>
</dbReference>
<dbReference type="GO" id="GO:0005096">
    <property type="term" value="F:GTPase activator activity"/>
    <property type="evidence" value="ECO:0007669"/>
    <property type="project" value="UniProtKB-KW"/>
</dbReference>
<dbReference type="GO" id="GO:0005093">
    <property type="term" value="F:Rab GDP-dissociation inhibitor activity"/>
    <property type="evidence" value="ECO:0000250"/>
    <property type="project" value="UniProtKB"/>
</dbReference>
<dbReference type="GO" id="GO:0050771">
    <property type="term" value="P:negative regulation of axonogenesis"/>
    <property type="evidence" value="ECO:0000250"/>
    <property type="project" value="UniProtKB"/>
</dbReference>
<dbReference type="GO" id="GO:0090315">
    <property type="term" value="P:negative regulation of protein targeting to membrane"/>
    <property type="evidence" value="ECO:0000250"/>
    <property type="project" value="UniProtKB"/>
</dbReference>
<dbReference type="GO" id="GO:0015031">
    <property type="term" value="P:protein transport"/>
    <property type="evidence" value="ECO:0007669"/>
    <property type="project" value="InterPro"/>
</dbReference>
<dbReference type="GO" id="GO:0032482">
    <property type="term" value="P:Rab protein signal transduction"/>
    <property type="evidence" value="ECO:0000250"/>
    <property type="project" value="UniProtKB"/>
</dbReference>
<dbReference type="GO" id="GO:0016192">
    <property type="term" value="P:vesicle-mediated transport"/>
    <property type="evidence" value="ECO:0007669"/>
    <property type="project" value="TreeGrafter"/>
</dbReference>
<dbReference type="FunFam" id="1.10.405.10:FF:000001">
    <property type="entry name" value="Rab GDP dissociation inhibitor"/>
    <property type="match status" value="1"/>
</dbReference>
<dbReference type="FunFam" id="3.30.519.10:FF:000005">
    <property type="entry name" value="Rab GDP dissociation inhibitor"/>
    <property type="match status" value="1"/>
</dbReference>
<dbReference type="FunFam" id="3.30.519.10:FF:000014">
    <property type="entry name" value="Rab GDP dissociation inhibitor"/>
    <property type="match status" value="1"/>
</dbReference>
<dbReference type="FunFam" id="3.50.50.60:FF:000158">
    <property type="entry name" value="Rab GDP dissociation inhibitor"/>
    <property type="match status" value="1"/>
</dbReference>
<dbReference type="FunFam" id="3.50.50.60:FF:000232">
    <property type="entry name" value="Rab GDP dissociation inhibitor"/>
    <property type="match status" value="1"/>
</dbReference>
<dbReference type="Gene3D" id="3.50.50.60">
    <property type="entry name" value="FAD/NAD(P)-binding domain"/>
    <property type="match status" value="1"/>
</dbReference>
<dbReference type="Gene3D" id="1.10.405.10">
    <property type="entry name" value="Guanine Nucleotide Dissociation Inhibitor, domain 1"/>
    <property type="match status" value="1"/>
</dbReference>
<dbReference type="Gene3D" id="3.30.519.10">
    <property type="entry name" value="Guanine Nucleotide Dissociation Inhibitor, domain 2"/>
    <property type="match status" value="1"/>
</dbReference>
<dbReference type="InterPro" id="IPR036188">
    <property type="entry name" value="FAD/NAD-bd_sf"/>
</dbReference>
<dbReference type="InterPro" id="IPR018203">
    <property type="entry name" value="GDP_dissociation_inhibitor"/>
</dbReference>
<dbReference type="InterPro" id="IPR000806">
    <property type="entry name" value="RabGDI"/>
</dbReference>
<dbReference type="PANTHER" id="PTHR11787:SF3">
    <property type="entry name" value="RAB GDP DISSOCIATION INHIBITOR ALPHA"/>
    <property type="match status" value="1"/>
</dbReference>
<dbReference type="PANTHER" id="PTHR11787">
    <property type="entry name" value="RAB GDP-DISSOCIATION INHIBITOR"/>
    <property type="match status" value="1"/>
</dbReference>
<dbReference type="Pfam" id="PF00996">
    <property type="entry name" value="GDI"/>
    <property type="match status" value="1"/>
</dbReference>
<dbReference type="PRINTS" id="PR00892">
    <property type="entry name" value="RABGDI"/>
</dbReference>
<dbReference type="PRINTS" id="PR00891">
    <property type="entry name" value="RABGDIREP"/>
</dbReference>
<dbReference type="SUPFAM" id="SSF51905">
    <property type="entry name" value="FAD/NAD(P)-binding domain"/>
    <property type="match status" value="2"/>
</dbReference>
<reference key="1">
    <citation type="journal article" date="2003" name="Mol. Biol. Evol.">
        <title>Gene diversity patterns at 10 X-chromosomal loci in humans and chimpanzees.</title>
        <authorList>
            <person name="Kitano T."/>
            <person name="Schwarz C."/>
            <person name="Nickel B."/>
            <person name="Paeaebo S."/>
        </authorList>
    </citation>
    <scope>NUCLEOTIDE SEQUENCE [MRNA]</scope>
</reference>
<reference key="2">
    <citation type="submission" date="2004-11" db="EMBL/GenBank/DDBJ databases">
        <authorList>
            <consortium name="The German cDNA consortium"/>
        </authorList>
    </citation>
    <scope>NUCLEOTIDE SEQUENCE [LARGE SCALE MRNA]</scope>
    <source>
        <tissue>Brain cortex</tissue>
    </source>
</reference>
<keyword id="KW-0963">Cytoplasm</keyword>
<keyword id="KW-0333">Golgi apparatus</keyword>
<keyword id="KW-0343">GTPase activation</keyword>
<protein>
    <recommendedName>
        <fullName>Rab GDP dissociation inhibitor alpha</fullName>
        <shortName>Rab GDI alpha</shortName>
    </recommendedName>
    <alternativeName>
        <fullName>Guanosine diphosphate dissociation inhibitor 1</fullName>
        <shortName>GDI-1</shortName>
    </alternativeName>
</protein>